<accession>P75540</accession>
<evidence type="ECO:0000255" key="1">
    <source>
        <dbReference type="HAMAP-Rule" id="MF_00503"/>
    </source>
</evidence>
<evidence type="ECO:0000305" key="2"/>
<evidence type="ECO:0007829" key="3">
    <source>
        <dbReference type="PDB" id="7OOD"/>
    </source>
</evidence>
<evidence type="ECO:0007829" key="4">
    <source>
        <dbReference type="PDB" id="8P8B"/>
    </source>
</evidence>
<dbReference type="EMBL" id="U00089">
    <property type="protein sequence ID" value="AAB96248.1"/>
    <property type="molecule type" value="Genomic_DNA"/>
</dbReference>
<dbReference type="PIR" id="S73926">
    <property type="entry name" value="S73926"/>
</dbReference>
<dbReference type="RefSeq" id="NP_109919.1">
    <property type="nucleotide sequence ID" value="NC_000912.1"/>
</dbReference>
<dbReference type="RefSeq" id="WP_010874588.1">
    <property type="nucleotide sequence ID" value="NZ_OU342337.1"/>
</dbReference>
<dbReference type="PDB" id="7OOD">
    <property type="method" value="EM"/>
    <property type="resolution" value="3.40 A"/>
    <property type="chains" value="f=1-149"/>
</dbReference>
<dbReference type="PDB" id="7P6Z">
    <property type="method" value="EM"/>
    <property type="resolution" value="3.50 A"/>
    <property type="chains" value="f=1-149"/>
</dbReference>
<dbReference type="PDB" id="7PAH">
    <property type="method" value="EM"/>
    <property type="resolution" value="9.50 A"/>
    <property type="chains" value="f=1-149"/>
</dbReference>
<dbReference type="PDB" id="7PAI">
    <property type="method" value="EM"/>
    <property type="resolution" value="6.70 A"/>
    <property type="chains" value="f=1-149"/>
</dbReference>
<dbReference type="PDB" id="7PAJ">
    <property type="method" value="EM"/>
    <property type="resolution" value="7.30 A"/>
    <property type="chains" value="f=1-149"/>
</dbReference>
<dbReference type="PDB" id="7PAK">
    <property type="method" value="EM"/>
    <property type="resolution" value="5.30 A"/>
    <property type="chains" value="f=1-149"/>
</dbReference>
<dbReference type="PDB" id="7PAL">
    <property type="method" value="EM"/>
    <property type="resolution" value="4.70 A"/>
    <property type="chains" value="f=1-149"/>
</dbReference>
<dbReference type="PDB" id="7PAM">
    <property type="method" value="EM"/>
    <property type="resolution" value="6.80 A"/>
    <property type="chains" value="f=1-149"/>
</dbReference>
<dbReference type="PDB" id="7PAN">
    <property type="method" value="EM"/>
    <property type="resolution" value="9.70 A"/>
    <property type="chains" value="f=1-149"/>
</dbReference>
<dbReference type="PDB" id="7PAO">
    <property type="method" value="EM"/>
    <property type="resolution" value="7.00 A"/>
    <property type="chains" value="f=1-149"/>
</dbReference>
<dbReference type="PDB" id="7PAQ">
    <property type="method" value="EM"/>
    <property type="resolution" value="8.90 A"/>
    <property type="chains" value="f=1-149"/>
</dbReference>
<dbReference type="PDB" id="7PAR">
    <property type="method" value="EM"/>
    <property type="resolution" value="8.20 A"/>
    <property type="chains" value="f=1-149"/>
</dbReference>
<dbReference type="PDB" id="7PAS">
    <property type="method" value="EM"/>
    <property type="resolution" value="16.00 A"/>
    <property type="chains" value="f=1-149"/>
</dbReference>
<dbReference type="PDB" id="7PAT">
    <property type="method" value="EM"/>
    <property type="resolution" value="9.20 A"/>
    <property type="chains" value="f=1-149"/>
</dbReference>
<dbReference type="PDB" id="7PAU">
    <property type="method" value="EM"/>
    <property type="resolution" value="8.30 A"/>
    <property type="chains" value="f=1-149"/>
</dbReference>
<dbReference type="PDB" id="7PH9">
    <property type="method" value="EM"/>
    <property type="resolution" value="8.70 A"/>
    <property type="chains" value="f=1-149"/>
</dbReference>
<dbReference type="PDB" id="7PHA">
    <property type="method" value="EM"/>
    <property type="resolution" value="8.50 A"/>
    <property type="chains" value="f=1-149"/>
</dbReference>
<dbReference type="PDB" id="7PHB">
    <property type="method" value="EM"/>
    <property type="resolution" value="4.90 A"/>
    <property type="chains" value="f=1-149"/>
</dbReference>
<dbReference type="PDB" id="7PHC">
    <property type="method" value="EM"/>
    <property type="resolution" value="9.90 A"/>
    <property type="chains" value="f=1-149"/>
</dbReference>
<dbReference type="PDB" id="7PI8">
    <property type="method" value="EM"/>
    <property type="resolution" value="8.90 A"/>
    <property type="chains" value="f=1-149"/>
</dbReference>
<dbReference type="PDB" id="7PI9">
    <property type="method" value="EM"/>
    <property type="resolution" value="6.30 A"/>
    <property type="chains" value="f=1-149"/>
</dbReference>
<dbReference type="PDB" id="7PIA">
    <property type="method" value="EM"/>
    <property type="resolution" value="13.60 A"/>
    <property type="chains" value="f=1-149"/>
</dbReference>
<dbReference type="PDB" id="7PIB">
    <property type="method" value="EM"/>
    <property type="resolution" value="4.70 A"/>
    <property type="chains" value="f=1-149"/>
</dbReference>
<dbReference type="PDB" id="7PIC">
    <property type="method" value="EM"/>
    <property type="resolution" value="9.10 A"/>
    <property type="chains" value="f=1-149"/>
</dbReference>
<dbReference type="PDB" id="7PIO">
    <property type="method" value="EM"/>
    <property type="resolution" value="9.50 A"/>
    <property type="chains" value="f=1-149"/>
</dbReference>
<dbReference type="PDB" id="7PIP">
    <property type="method" value="EM"/>
    <property type="resolution" value="9.30 A"/>
    <property type="chains" value="f=1-149"/>
</dbReference>
<dbReference type="PDB" id="7PIQ">
    <property type="method" value="EM"/>
    <property type="resolution" value="9.70 A"/>
    <property type="chains" value="f=1-149"/>
</dbReference>
<dbReference type="PDB" id="7PIR">
    <property type="method" value="EM"/>
    <property type="resolution" value="12.10 A"/>
    <property type="chains" value="f=1-149"/>
</dbReference>
<dbReference type="PDB" id="7PIS">
    <property type="method" value="EM"/>
    <property type="resolution" value="15.00 A"/>
    <property type="chains" value="f=1-149"/>
</dbReference>
<dbReference type="PDB" id="7PIT">
    <property type="method" value="EM"/>
    <property type="resolution" value="5.70 A"/>
    <property type="chains" value="f=1-149"/>
</dbReference>
<dbReference type="PDB" id="8P7X">
    <property type="method" value="EM"/>
    <property type="resolution" value="3.03 A"/>
    <property type="chains" value="f=1-149"/>
</dbReference>
<dbReference type="PDB" id="8P7Y">
    <property type="method" value="EM"/>
    <property type="resolution" value="3.70 A"/>
    <property type="chains" value="f=1-149"/>
</dbReference>
<dbReference type="PDB" id="8P8B">
    <property type="method" value="EM"/>
    <property type="resolution" value="2.90 A"/>
    <property type="chains" value="f=1-149"/>
</dbReference>
<dbReference type="PDB" id="8P8V">
    <property type="method" value="EM"/>
    <property type="resolution" value="8.70 A"/>
    <property type="chains" value="f=1-149"/>
</dbReference>
<dbReference type="PDB" id="8P8W">
    <property type="method" value="EM"/>
    <property type="resolution" value="8.70 A"/>
    <property type="chains" value="f=1-149"/>
</dbReference>
<dbReference type="PDBsum" id="7OOD"/>
<dbReference type="PDBsum" id="7P6Z"/>
<dbReference type="PDBsum" id="7PAH"/>
<dbReference type="PDBsum" id="7PAI"/>
<dbReference type="PDBsum" id="7PAJ"/>
<dbReference type="PDBsum" id="7PAK"/>
<dbReference type="PDBsum" id="7PAL"/>
<dbReference type="PDBsum" id="7PAM"/>
<dbReference type="PDBsum" id="7PAN"/>
<dbReference type="PDBsum" id="7PAO"/>
<dbReference type="PDBsum" id="7PAQ"/>
<dbReference type="PDBsum" id="7PAR"/>
<dbReference type="PDBsum" id="7PAS"/>
<dbReference type="PDBsum" id="7PAT"/>
<dbReference type="PDBsum" id="7PAU"/>
<dbReference type="PDBsum" id="7PH9"/>
<dbReference type="PDBsum" id="7PHA"/>
<dbReference type="PDBsum" id="7PHB"/>
<dbReference type="PDBsum" id="7PHC"/>
<dbReference type="PDBsum" id="7PI8"/>
<dbReference type="PDBsum" id="7PI9"/>
<dbReference type="PDBsum" id="7PIA"/>
<dbReference type="PDBsum" id="7PIB"/>
<dbReference type="PDBsum" id="7PIC"/>
<dbReference type="PDBsum" id="7PIO"/>
<dbReference type="PDBsum" id="7PIP"/>
<dbReference type="PDBsum" id="7PIQ"/>
<dbReference type="PDBsum" id="7PIR"/>
<dbReference type="PDBsum" id="7PIS"/>
<dbReference type="PDBsum" id="7PIT"/>
<dbReference type="PDBsum" id="8P7X"/>
<dbReference type="PDBsum" id="8P7Y"/>
<dbReference type="PDBsum" id="8P8B"/>
<dbReference type="PDBsum" id="8P8V"/>
<dbReference type="PDBsum" id="8P8W"/>
<dbReference type="EMDB" id="EMD-13234"/>
<dbReference type="EMDB" id="EMD-13272"/>
<dbReference type="EMDB" id="EMD-13273"/>
<dbReference type="EMDB" id="EMD-13274"/>
<dbReference type="EMDB" id="EMD-13275"/>
<dbReference type="EMDB" id="EMD-13276"/>
<dbReference type="EMDB" id="EMD-13277"/>
<dbReference type="EMDB" id="EMD-13278"/>
<dbReference type="EMDB" id="EMD-13279"/>
<dbReference type="EMDB" id="EMD-13280"/>
<dbReference type="EMDB" id="EMD-13281"/>
<dbReference type="EMDB" id="EMD-13282"/>
<dbReference type="EMDB" id="EMD-13285"/>
<dbReference type="EMDB" id="EMD-13286"/>
<dbReference type="EMDB" id="EMD-13410"/>
<dbReference type="EMDB" id="EMD-13411"/>
<dbReference type="EMDB" id="EMD-13412"/>
<dbReference type="EMDB" id="EMD-13413"/>
<dbReference type="EMDB" id="EMD-13432"/>
<dbReference type="EMDB" id="EMD-13433"/>
<dbReference type="EMDB" id="EMD-13434"/>
<dbReference type="EMDB" id="EMD-13435"/>
<dbReference type="EMDB" id="EMD-13436"/>
<dbReference type="EMDB" id="EMD-13445"/>
<dbReference type="EMDB" id="EMD-13446"/>
<dbReference type="EMDB" id="EMD-13447"/>
<dbReference type="EMDB" id="EMD-13448"/>
<dbReference type="EMDB" id="EMD-13449"/>
<dbReference type="EMDB" id="EMD-13450"/>
<dbReference type="SMR" id="P75540"/>
<dbReference type="IntAct" id="P75540">
    <property type="interactions" value="2"/>
</dbReference>
<dbReference type="STRING" id="272634.MPN_231"/>
<dbReference type="EnsemblBacteria" id="AAB96248">
    <property type="protein sequence ID" value="AAB96248"/>
    <property type="gene ID" value="MPN_231"/>
</dbReference>
<dbReference type="GeneID" id="66609123"/>
<dbReference type="KEGG" id="mpn:MPN_231"/>
<dbReference type="PATRIC" id="fig|272634.6.peg.250"/>
<dbReference type="HOGENOM" id="CLU_078938_3_0_14"/>
<dbReference type="OrthoDB" id="9788336at2"/>
<dbReference type="BioCyc" id="MPNE272634:G1GJ3-369-MONOMER"/>
<dbReference type="Proteomes" id="UP000000808">
    <property type="component" value="Chromosome"/>
</dbReference>
<dbReference type="GO" id="GO:1990904">
    <property type="term" value="C:ribonucleoprotein complex"/>
    <property type="evidence" value="ECO:0007669"/>
    <property type="project" value="UniProtKB-KW"/>
</dbReference>
<dbReference type="GO" id="GO:0005840">
    <property type="term" value="C:ribosome"/>
    <property type="evidence" value="ECO:0007669"/>
    <property type="project" value="UniProtKB-KW"/>
</dbReference>
<dbReference type="GO" id="GO:0019843">
    <property type="term" value="F:rRNA binding"/>
    <property type="evidence" value="ECO:0007669"/>
    <property type="project" value="UniProtKB-UniRule"/>
</dbReference>
<dbReference type="GO" id="GO:0003735">
    <property type="term" value="F:structural constituent of ribosome"/>
    <property type="evidence" value="ECO:0007669"/>
    <property type="project" value="InterPro"/>
</dbReference>
<dbReference type="GO" id="GO:0006412">
    <property type="term" value="P:translation"/>
    <property type="evidence" value="ECO:0007669"/>
    <property type="project" value="UniProtKB-UniRule"/>
</dbReference>
<dbReference type="Gene3D" id="3.10.430.100">
    <property type="entry name" value="Ribosomal protein L9, C-terminal domain"/>
    <property type="match status" value="1"/>
</dbReference>
<dbReference type="Gene3D" id="3.40.5.10">
    <property type="entry name" value="Ribosomal protein L9, N-terminal domain"/>
    <property type="match status" value="1"/>
</dbReference>
<dbReference type="HAMAP" id="MF_00503">
    <property type="entry name" value="Ribosomal_bL9"/>
    <property type="match status" value="1"/>
</dbReference>
<dbReference type="InterPro" id="IPR000244">
    <property type="entry name" value="Ribosomal_bL9"/>
</dbReference>
<dbReference type="InterPro" id="IPR009027">
    <property type="entry name" value="Ribosomal_bL9/RNase_H1_N"/>
</dbReference>
<dbReference type="InterPro" id="IPR020594">
    <property type="entry name" value="Ribosomal_bL9_bac/chp"/>
</dbReference>
<dbReference type="InterPro" id="IPR020069">
    <property type="entry name" value="Ribosomal_bL9_C"/>
</dbReference>
<dbReference type="InterPro" id="IPR036791">
    <property type="entry name" value="Ribosomal_bL9_C_sf"/>
</dbReference>
<dbReference type="InterPro" id="IPR020070">
    <property type="entry name" value="Ribosomal_bL9_N"/>
</dbReference>
<dbReference type="InterPro" id="IPR036935">
    <property type="entry name" value="Ribosomal_bL9_N_sf"/>
</dbReference>
<dbReference type="NCBIfam" id="TIGR00158">
    <property type="entry name" value="L9"/>
    <property type="match status" value="1"/>
</dbReference>
<dbReference type="PANTHER" id="PTHR21368">
    <property type="entry name" value="50S RIBOSOMAL PROTEIN L9"/>
    <property type="match status" value="1"/>
</dbReference>
<dbReference type="Pfam" id="PF03948">
    <property type="entry name" value="Ribosomal_L9_C"/>
    <property type="match status" value="1"/>
</dbReference>
<dbReference type="Pfam" id="PF01281">
    <property type="entry name" value="Ribosomal_L9_N"/>
    <property type="match status" value="1"/>
</dbReference>
<dbReference type="SUPFAM" id="SSF55658">
    <property type="entry name" value="L9 N-domain-like"/>
    <property type="match status" value="1"/>
</dbReference>
<dbReference type="SUPFAM" id="SSF55653">
    <property type="entry name" value="Ribosomal protein L9 C-domain"/>
    <property type="match status" value="1"/>
</dbReference>
<dbReference type="PROSITE" id="PS00651">
    <property type="entry name" value="RIBOSOMAL_L9"/>
    <property type="match status" value="1"/>
</dbReference>
<reference key="1">
    <citation type="journal article" date="1996" name="Nucleic Acids Res.">
        <title>Complete sequence analysis of the genome of the bacterium Mycoplasma pneumoniae.</title>
        <authorList>
            <person name="Himmelreich R."/>
            <person name="Hilbert H."/>
            <person name="Plagens H."/>
            <person name="Pirkl E."/>
            <person name="Li B.-C."/>
            <person name="Herrmann R."/>
        </authorList>
    </citation>
    <scope>NUCLEOTIDE SEQUENCE [LARGE SCALE GENOMIC DNA]</scope>
    <source>
        <strain>ATCC 29342 / M129 / Subtype 1</strain>
    </source>
</reference>
<sequence>MKVILKQDVSNLGKRFDVVDVKDGYAIHFLFPKKLAAPLTKKSLQDRDLFLKKQQEHYEINKALSHKLKEVIEQTELHFSLKEHNGRPYGSIITKQIINQAHTKGMALQKFMFKDNVRLGFGDHEITLHIFEDTTAVLKVKVTPDNGVK</sequence>
<feature type="chain" id="PRO_0000176653" description="Large ribosomal subunit protein bL9">
    <location>
        <begin position="1"/>
        <end position="149"/>
    </location>
</feature>
<feature type="strand" evidence="4">
    <location>
        <begin position="2"/>
        <end position="4"/>
    </location>
</feature>
<feature type="strand" evidence="4">
    <location>
        <begin position="10"/>
        <end position="12"/>
    </location>
</feature>
<feature type="strand" evidence="4">
    <location>
        <begin position="14"/>
        <end position="16"/>
    </location>
</feature>
<feature type="strand" evidence="4">
    <location>
        <begin position="18"/>
        <end position="20"/>
    </location>
</feature>
<feature type="helix" evidence="4">
    <location>
        <begin position="23"/>
        <end position="28"/>
    </location>
</feature>
<feature type="turn" evidence="4">
    <location>
        <begin position="29"/>
        <end position="34"/>
    </location>
</feature>
<feature type="helix" evidence="4">
    <location>
        <begin position="40"/>
        <end position="42"/>
    </location>
</feature>
<feature type="helix" evidence="4">
    <location>
        <begin position="44"/>
        <end position="74"/>
    </location>
</feature>
<feature type="strand" evidence="3">
    <location>
        <begin position="77"/>
        <end position="81"/>
    </location>
</feature>
<feature type="strand" evidence="3">
    <location>
        <begin position="87"/>
        <end position="90"/>
    </location>
</feature>
<feature type="helix" evidence="4">
    <location>
        <begin position="97"/>
        <end position="100"/>
    </location>
</feature>
<feature type="turn" evidence="4">
    <location>
        <begin position="101"/>
        <end position="103"/>
    </location>
</feature>
<feature type="turn" evidence="4">
    <location>
        <begin position="112"/>
        <end position="114"/>
    </location>
</feature>
<feature type="strand" evidence="4">
    <location>
        <begin position="130"/>
        <end position="132"/>
    </location>
</feature>
<feature type="strand" evidence="4">
    <location>
        <begin position="134"/>
        <end position="137"/>
    </location>
</feature>
<feature type="strand" evidence="4">
    <location>
        <begin position="140"/>
        <end position="142"/>
    </location>
</feature>
<organism>
    <name type="scientific">Mycoplasma pneumoniae (strain ATCC 29342 / M129 / Subtype 1)</name>
    <name type="common">Mycoplasmoides pneumoniae</name>
    <dbReference type="NCBI Taxonomy" id="272634"/>
    <lineage>
        <taxon>Bacteria</taxon>
        <taxon>Bacillati</taxon>
        <taxon>Mycoplasmatota</taxon>
        <taxon>Mycoplasmoidales</taxon>
        <taxon>Mycoplasmoidaceae</taxon>
        <taxon>Mycoplasmoides</taxon>
    </lineage>
</organism>
<protein>
    <recommendedName>
        <fullName evidence="1">Large ribosomal subunit protein bL9</fullName>
    </recommendedName>
    <alternativeName>
        <fullName evidence="2">50S ribosomal protein L9</fullName>
    </alternativeName>
</protein>
<keyword id="KW-0002">3D-structure</keyword>
<keyword id="KW-1185">Reference proteome</keyword>
<keyword id="KW-0687">Ribonucleoprotein</keyword>
<keyword id="KW-0689">Ribosomal protein</keyword>
<keyword id="KW-0694">RNA-binding</keyword>
<keyword id="KW-0699">rRNA-binding</keyword>
<comment type="function">
    <text evidence="1">Binds to the 23S rRNA.</text>
</comment>
<comment type="similarity">
    <text evidence="1">Belongs to the bacterial ribosomal protein bL9 family.</text>
</comment>
<gene>
    <name evidence="1" type="primary">rplI</name>
    <name type="ordered locus">MPN_231</name>
    <name type="ORF">MP600</name>
</gene>
<name>RL9_MYCPN</name>
<proteinExistence type="evidence at protein level"/>